<proteinExistence type="inferred from homology"/>
<reference key="1">
    <citation type="journal article" date="1999" name="Nature">
        <title>Evidence for lateral gene transfer between Archaea and Bacteria from genome sequence of Thermotoga maritima.</title>
        <authorList>
            <person name="Nelson K.E."/>
            <person name="Clayton R.A."/>
            <person name="Gill S.R."/>
            <person name="Gwinn M.L."/>
            <person name="Dodson R.J."/>
            <person name="Haft D.H."/>
            <person name="Hickey E.K."/>
            <person name="Peterson J.D."/>
            <person name="Nelson W.C."/>
            <person name="Ketchum K.A."/>
            <person name="McDonald L.A."/>
            <person name="Utterback T.R."/>
            <person name="Malek J.A."/>
            <person name="Linher K.D."/>
            <person name="Garrett M.M."/>
            <person name="Stewart A.M."/>
            <person name="Cotton M.D."/>
            <person name="Pratt M.S."/>
            <person name="Phillips C.A."/>
            <person name="Richardson D.L."/>
            <person name="Heidelberg J.F."/>
            <person name="Sutton G.G."/>
            <person name="Fleischmann R.D."/>
            <person name="Eisen J.A."/>
            <person name="White O."/>
            <person name="Salzberg S.L."/>
            <person name="Smith H.O."/>
            <person name="Venter J.C."/>
            <person name="Fraser C.M."/>
        </authorList>
    </citation>
    <scope>NUCLEOTIDE SEQUENCE [LARGE SCALE GENOMIC DNA]</scope>
    <source>
        <strain>ATCC 43589 / DSM 3109 / JCM 10099 / NBRC 100826 / MSB8</strain>
    </source>
</reference>
<reference key="2">
    <citation type="journal article" date="1998" name="Syst. Appl. Microbiol.">
        <title>Properties of an alpha-galactosidase, and structure of its gene galA, within an alpha- and beta-galactoside utilization gene cluster of the hyperthermophilic bacterium Thermotoga maritima.</title>
        <authorList>
            <person name="Liebl W."/>
            <person name="Wagner B."/>
            <person name="Schellhase J."/>
        </authorList>
    </citation>
    <scope>NUCLEOTIDE SEQUENCE [GENOMIC DNA] OF 1-129</scope>
    <source>
        <strain>ATCC 43589 / DSM 3109 / JCM 10099 / NBRC 100826 / MSB8</strain>
    </source>
</reference>
<feature type="chain" id="PRO_0000184631" description="Galactokinase">
    <location>
        <begin position="1"/>
        <end position="350"/>
    </location>
</feature>
<feature type="active site" description="Proton acceptor" evidence="1">
    <location>
        <position position="146"/>
    </location>
</feature>
<feature type="binding site" evidence="1">
    <location>
        <begin position="14"/>
        <end position="17"/>
    </location>
    <ligand>
        <name>substrate</name>
    </ligand>
</feature>
<feature type="binding site" evidence="1">
    <location>
        <position position="46"/>
    </location>
    <ligand>
        <name>ATP</name>
        <dbReference type="ChEBI" id="CHEBI:30616"/>
    </ligand>
</feature>
<feature type="binding site" evidence="1">
    <location>
        <begin position="96"/>
        <end position="102"/>
    </location>
    <ligand>
        <name>ATP</name>
        <dbReference type="ChEBI" id="CHEBI:30616"/>
    </ligand>
</feature>
<feature type="binding site" evidence="1">
    <location>
        <position position="102"/>
    </location>
    <ligand>
        <name>Mg(2+)</name>
        <dbReference type="ChEBI" id="CHEBI:18420"/>
    </ligand>
</feature>
<feature type="binding site" evidence="1">
    <location>
        <position position="134"/>
    </location>
    <ligand>
        <name>Mg(2+)</name>
        <dbReference type="ChEBI" id="CHEBI:18420"/>
    </ligand>
</feature>
<feature type="binding site" evidence="1">
    <location>
        <position position="196"/>
    </location>
    <ligand>
        <name>substrate</name>
    </ligand>
</feature>
<feature type="site" description="Transition state stabilizer" evidence="1">
    <location>
        <position position="8"/>
    </location>
</feature>
<organism>
    <name type="scientific">Thermotoga maritima (strain ATCC 43589 / DSM 3109 / JCM 10099 / NBRC 100826 / MSB8)</name>
    <dbReference type="NCBI Taxonomy" id="243274"/>
    <lineage>
        <taxon>Bacteria</taxon>
        <taxon>Thermotogati</taxon>
        <taxon>Thermotogota</taxon>
        <taxon>Thermotogae</taxon>
        <taxon>Thermotogales</taxon>
        <taxon>Thermotogaceae</taxon>
        <taxon>Thermotoga</taxon>
    </lineage>
</organism>
<evidence type="ECO:0000255" key="1">
    <source>
        <dbReference type="HAMAP-Rule" id="MF_00246"/>
    </source>
</evidence>
<comment type="function">
    <text evidence="1">Catalyzes the transfer of the gamma-phosphate of ATP to D-galactose to form alpha-D-galactose-1-phosphate (Gal-1-P).</text>
</comment>
<comment type="catalytic activity">
    <reaction evidence="1">
        <text>alpha-D-galactose + ATP = alpha-D-galactose 1-phosphate + ADP + H(+)</text>
        <dbReference type="Rhea" id="RHEA:13553"/>
        <dbReference type="ChEBI" id="CHEBI:15378"/>
        <dbReference type="ChEBI" id="CHEBI:28061"/>
        <dbReference type="ChEBI" id="CHEBI:30616"/>
        <dbReference type="ChEBI" id="CHEBI:58336"/>
        <dbReference type="ChEBI" id="CHEBI:456216"/>
        <dbReference type="EC" id="2.7.1.6"/>
    </reaction>
</comment>
<comment type="pathway">
    <text evidence="1">Carbohydrate metabolism; galactose metabolism.</text>
</comment>
<comment type="subcellular location">
    <subcellularLocation>
        <location evidence="1">Cytoplasm</location>
    </subcellularLocation>
</comment>
<comment type="similarity">
    <text evidence="1">Belongs to the GHMP kinase family. GalK subfamily.</text>
</comment>
<gene>
    <name evidence="1" type="primary">galK</name>
    <name type="ordered locus">TM_1190</name>
</gene>
<keyword id="KW-0067">ATP-binding</keyword>
<keyword id="KW-0119">Carbohydrate metabolism</keyword>
<keyword id="KW-0963">Cytoplasm</keyword>
<keyword id="KW-0299">Galactose metabolism</keyword>
<keyword id="KW-0418">Kinase</keyword>
<keyword id="KW-0460">Magnesium</keyword>
<keyword id="KW-0479">Metal-binding</keyword>
<keyword id="KW-0547">Nucleotide-binding</keyword>
<keyword id="KW-1185">Reference proteome</keyword>
<keyword id="KW-0808">Transferase</keyword>
<protein>
    <recommendedName>
        <fullName evidence="1">Galactokinase</fullName>
        <ecNumber evidence="1">2.7.1.6</ecNumber>
    </recommendedName>
    <alternativeName>
        <fullName evidence="1">Galactose kinase</fullName>
    </alternativeName>
</protein>
<accession>P56838</accession>
<accession>O33837</accession>
<name>GAL1_THEMA</name>
<sequence length="350" mass="39589">MKVKAPGRINIIGEHTDYNDGYVLPFAVNRYVFLSIEGSERFIFHSENVNETVEMEKIEKLNKWTDYISGVIASFEKRGYRVSPVKISVSSNLPIGAGLSSSAALEVATAYAISEYFGFNVPKLELVKIAREAEVEFVGVRCGIMDQFTAVFGKKDHAIFLDTMTLEYEYVPLKLEGYEINLVDSNVKHELSSSEYNRRRQECEEVLKTLEKKSFREVTKEDLERLSGTLRKRAQHVLEENERVLKSVQALKEGDFETLGKLLFSSHESLRDLYEVSCEETDFIVDYLRGKEGILGARMVGGGFGGGVIVLSKKGAFGKIKEELVESYRKRFGIDLIFHEIESSDGVQKI</sequence>
<dbReference type="EC" id="2.7.1.6" evidence="1"/>
<dbReference type="EMBL" id="AE000512">
    <property type="protein sequence ID" value="AAD36265.1"/>
    <property type="molecule type" value="Genomic_DNA"/>
</dbReference>
<dbReference type="EMBL" id="AJ001072">
    <property type="protein sequence ID" value="CAA04516.1"/>
    <property type="molecule type" value="Genomic_DNA"/>
</dbReference>
<dbReference type="PIR" id="C72283">
    <property type="entry name" value="C72283"/>
</dbReference>
<dbReference type="RefSeq" id="NP_228995.1">
    <property type="nucleotide sequence ID" value="NC_000853.1"/>
</dbReference>
<dbReference type="RefSeq" id="WP_004080140.1">
    <property type="nucleotide sequence ID" value="NC_000853.1"/>
</dbReference>
<dbReference type="SMR" id="P56838"/>
<dbReference type="FunCoup" id="P56838">
    <property type="interactions" value="262"/>
</dbReference>
<dbReference type="STRING" id="243274.TM_1190"/>
<dbReference type="PaxDb" id="243274-THEMA_08380"/>
<dbReference type="EnsemblBacteria" id="AAD36265">
    <property type="protein sequence ID" value="AAD36265"/>
    <property type="gene ID" value="TM_1190"/>
</dbReference>
<dbReference type="KEGG" id="tma:TM1190"/>
<dbReference type="KEGG" id="tmi:THEMA_08380"/>
<dbReference type="KEGG" id="tmm:Tmari_1197"/>
<dbReference type="KEGG" id="tmw:THMA_1216"/>
<dbReference type="eggNOG" id="COG0153">
    <property type="taxonomic scope" value="Bacteria"/>
</dbReference>
<dbReference type="InParanoid" id="P56838"/>
<dbReference type="OrthoDB" id="250531at2"/>
<dbReference type="BioCyc" id="MetaCyc:MONOMER-505"/>
<dbReference type="UniPathway" id="UPA00214"/>
<dbReference type="Proteomes" id="UP000008183">
    <property type="component" value="Chromosome"/>
</dbReference>
<dbReference type="GO" id="GO:0005829">
    <property type="term" value="C:cytosol"/>
    <property type="evidence" value="ECO:0000318"/>
    <property type="project" value="GO_Central"/>
</dbReference>
<dbReference type="GO" id="GO:0005524">
    <property type="term" value="F:ATP binding"/>
    <property type="evidence" value="ECO:0007669"/>
    <property type="project" value="UniProtKB-UniRule"/>
</dbReference>
<dbReference type="GO" id="GO:0004335">
    <property type="term" value="F:galactokinase activity"/>
    <property type="evidence" value="ECO:0000318"/>
    <property type="project" value="GO_Central"/>
</dbReference>
<dbReference type="GO" id="GO:0000287">
    <property type="term" value="F:magnesium ion binding"/>
    <property type="evidence" value="ECO:0007669"/>
    <property type="project" value="UniProtKB-UniRule"/>
</dbReference>
<dbReference type="GO" id="GO:0006012">
    <property type="term" value="P:galactose metabolic process"/>
    <property type="evidence" value="ECO:0000318"/>
    <property type="project" value="GO_Central"/>
</dbReference>
<dbReference type="FunFam" id="3.30.230.10:FF:000126">
    <property type="entry name" value="Galactokinase"/>
    <property type="match status" value="1"/>
</dbReference>
<dbReference type="FunFam" id="3.30.70.890:FF:000001">
    <property type="entry name" value="Galactokinase"/>
    <property type="match status" value="1"/>
</dbReference>
<dbReference type="Gene3D" id="3.30.230.10">
    <property type="match status" value="1"/>
</dbReference>
<dbReference type="Gene3D" id="3.30.70.890">
    <property type="entry name" value="GHMP kinase, C-terminal domain"/>
    <property type="match status" value="1"/>
</dbReference>
<dbReference type="HAMAP" id="MF_00246">
    <property type="entry name" value="Galactokinase"/>
    <property type="match status" value="1"/>
</dbReference>
<dbReference type="InterPro" id="IPR000705">
    <property type="entry name" value="Galactokinase"/>
</dbReference>
<dbReference type="InterPro" id="IPR022963">
    <property type="entry name" value="Galactokinase_bac"/>
</dbReference>
<dbReference type="InterPro" id="IPR019741">
    <property type="entry name" value="Galactokinase_CS"/>
</dbReference>
<dbReference type="InterPro" id="IPR019539">
    <property type="entry name" value="GalKase_N"/>
</dbReference>
<dbReference type="InterPro" id="IPR013750">
    <property type="entry name" value="GHMP_kinase_C_dom"/>
</dbReference>
<dbReference type="InterPro" id="IPR036554">
    <property type="entry name" value="GHMP_kinase_C_sf"/>
</dbReference>
<dbReference type="InterPro" id="IPR006204">
    <property type="entry name" value="GHMP_kinase_N_dom"/>
</dbReference>
<dbReference type="InterPro" id="IPR006203">
    <property type="entry name" value="GHMP_knse_ATP-bd_CS"/>
</dbReference>
<dbReference type="InterPro" id="IPR006206">
    <property type="entry name" value="Mevalonate/galactokinase"/>
</dbReference>
<dbReference type="InterPro" id="IPR020568">
    <property type="entry name" value="Ribosomal_Su5_D2-typ_SF"/>
</dbReference>
<dbReference type="InterPro" id="IPR014721">
    <property type="entry name" value="Ribsml_uS5_D2-typ_fold_subgr"/>
</dbReference>
<dbReference type="NCBIfam" id="TIGR00131">
    <property type="entry name" value="gal_kin"/>
    <property type="match status" value="1"/>
</dbReference>
<dbReference type="NCBIfam" id="NF003006">
    <property type="entry name" value="PRK03817.1"/>
    <property type="match status" value="1"/>
</dbReference>
<dbReference type="PANTHER" id="PTHR10457:SF7">
    <property type="entry name" value="GALACTOKINASE-RELATED"/>
    <property type="match status" value="1"/>
</dbReference>
<dbReference type="PANTHER" id="PTHR10457">
    <property type="entry name" value="MEVALONATE KINASE/GALACTOKINASE"/>
    <property type="match status" value="1"/>
</dbReference>
<dbReference type="Pfam" id="PF10509">
    <property type="entry name" value="GalKase_gal_bdg"/>
    <property type="match status" value="1"/>
</dbReference>
<dbReference type="Pfam" id="PF08544">
    <property type="entry name" value="GHMP_kinases_C"/>
    <property type="match status" value="1"/>
</dbReference>
<dbReference type="Pfam" id="PF00288">
    <property type="entry name" value="GHMP_kinases_N"/>
    <property type="match status" value="1"/>
</dbReference>
<dbReference type="PIRSF" id="PIRSF000530">
    <property type="entry name" value="Galactokinase"/>
    <property type="match status" value="1"/>
</dbReference>
<dbReference type="PRINTS" id="PR00473">
    <property type="entry name" value="GALCTOKINASE"/>
</dbReference>
<dbReference type="PRINTS" id="PR00959">
    <property type="entry name" value="MEVGALKINASE"/>
</dbReference>
<dbReference type="SUPFAM" id="SSF55060">
    <property type="entry name" value="GHMP Kinase, C-terminal domain"/>
    <property type="match status" value="1"/>
</dbReference>
<dbReference type="SUPFAM" id="SSF54211">
    <property type="entry name" value="Ribosomal protein S5 domain 2-like"/>
    <property type="match status" value="1"/>
</dbReference>
<dbReference type="PROSITE" id="PS00106">
    <property type="entry name" value="GALACTOKINASE"/>
    <property type="match status" value="1"/>
</dbReference>
<dbReference type="PROSITE" id="PS00627">
    <property type="entry name" value="GHMP_KINASES_ATP"/>
    <property type="match status" value="1"/>
</dbReference>